<organism>
    <name type="scientific">Mus musculus</name>
    <name type="common">Mouse</name>
    <dbReference type="NCBI Taxonomy" id="10090"/>
    <lineage>
        <taxon>Eukaryota</taxon>
        <taxon>Metazoa</taxon>
        <taxon>Chordata</taxon>
        <taxon>Craniata</taxon>
        <taxon>Vertebrata</taxon>
        <taxon>Euteleostomi</taxon>
        <taxon>Mammalia</taxon>
        <taxon>Eutheria</taxon>
        <taxon>Euarchontoglires</taxon>
        <taxon>Glires</taxon>
        <taxon>Rodentia</taxon>
        <taxon>Myomorpha</taxon>
        <taxon>Muroidea</taxon>
        <taxon>Muridae</taxon>
        <taxon>Murinae</taxon>
        <taxon>Mus</taxon>
        <taxon>Mus</taxon>
    </lineage>
</organism>
<accession>Q8K3U4</accession>
<accession>A3KGR4</accession>
<accession>Q3V491</accession>
<sequence>MKLLLLTLAALLLVSQLTPGDAQKCWNLHGKCRHRCSRKESVYVYCTNGKMCCVKPKYQPKPKPWMF</sequence>
<comment type="function">
    <text evidence="1">Has antibacterial activity.</text>
</comment>
<comment type="subcellular location">
    <subcellularLocation>
        <location evidence="1">Secreted</location>
    </subcellularLocation>
</comment>
<comment type="similarity">
    <text evidence="3">Belongs to the beta-defensin family.</text>
</comment>
<reference key="1">
    <citation type="journal article" date="2005" name="Physiol. Genomics">
        <title>Cross-species analysis of the mammalian beta-defensin gene family: presence of syntenic gene clusters and preferential expression in the male reproductive tract.</title>
        <authorList>
            <person name="Patil A.A."/>
            <person name="Cai Y."/>
            <person name="Sang Y."/>
            <person name="Blecha F."/>
            <person name="Zhang G."/>
        </authorList>
    </citation>
    <scope>NUCLEOTIDE SEQUENCE [MRNA]</scope>
</reference>
<reference key="2">
    <citation type="submission" date="2004-04" db="EMBL/GenBank/DDBJ databases">
        <title>Male reproductive tract specific rodent beta defensins.</title>
        <authorList>
            <person name="Yashwanth R."/>
            <person name="Yenugu S."/>
            <person name="Hamil K.G."/>
            <person name="French F.S."/>
            <person name="Hall S.H."/>
        </authorList>
    </citation>
    <scope>NUCLEOTIDE SEQUENCE [MRNA]</scope>
    <source>
        <strain>CD-1</strain>
        <tissue>Testis</tissue>
    </source>
</reference>
<reference key="3">
    <citation type="journal article" date="2005" name="Science">
        <title>The transcriptional landscape of the mammalian genome.</title>
        <authorList>
            <person name="Carninci P."/>
            <person name="Kasukawa T."/>
            <person name="Katayama S."/>
            <person name="Gough J."/>
            <person name="Frith M.C."/>
            <person name="Maeda N."/>
            <person name="Oyama R."/>
            <person name="Ravasi T."/>
            <person name="Lenhard B."/>
            <person name="Wells C."/>
            <person name="Kodzius R."/>
            <person name="Shimokawa K."/>
            <person name="Bajic V.B."/>
            <person name="Brenner S.E."/>
            <person name="Batalov S."/>
            <person name="Forrest A.R."/>
            <person name="Zavolan M."/>
            <person name="Davis M.J."/>
            <person name="Wilming L.G."/>
            <person name="Aidinis V."/>
            <person name="Allen J.E."/>
            <person name="Ambesi-Impiombato A."/>
            <person name="Apweiler R."/>
            <person name="Aturaliya R.N."/>
            <person name="Bailey T.L."/>
            <person name="Bansal M."/>
            <person name="Baxter L."/>
            <person name="Beisel K.W."/>
            <person name="Bersano T."/>
            <person name="Bono H."/>
            <person name="Chalk A.M."/>
            <person name="Chiu K.P."/>
            <person name="Choudhary V."/>
            <person name="Christoffels A."/>
            <person name="Clutterbuck D.R."/>
            <person name="Crowe M.L."/>
            <person name="Dalla E."/>
            <person name="Dalrymple B.P."/>
            <person name="de Bono B."/>
            <person name="Della Gatta G."/>
            <person name="di Bernardo D."/>
            <person name="Down T."/>
            <person name="Engstrom P."/>
            <person name="Fagiolini M."/>
            <person name="Faulkner G."/>
            <person name="Fletcher C.F."/>
            <person name="Fukushima T."/>
            <person name="Furuno M."/>
            <person name="Futaki S."/>
            <person name="Gariboldi M."/>
            <person name="Georgii-Hemming P."/>
            <person name="Gingeras T.R."/>
            <person name="Gojobori T."/>
            <person name="Green R.E."/>
            <person name="Gustincich S."/>
            <person name="Harbers M."/>
            <person name="Hayashi Y."/>
            <person name="Hensch T.K."/>
            <person name="Hirokawa N."/>
            <person name="Hill D."/>
            <person name="Huminiecki L."/>
            <person name="Iacono M."/>
            <person name="Ikeo K."/>
            <person name="Iwama A."/>
            <person name="Ishikawa T."/>
            <person name="Jakt M."/>
            <person name="Kanapin A."/>
            <person name="Katoh M."/>
            <person name="Kawasawa Y."/>
            <person name="Kelso J."/>
            <person name="Kitamura H."/>
            <person name="Kitano H."/>
            <person name="Kollias G."/>
            <person name="Krishnan S.P."/>
            <person name="Kruger A."/>
            <person name="Kummerfeld S.K."/>
            <person name="Kurochkin I.V."/>
            <person name="Lareau L.F."/>
            <person name="Lazarevic D."/>
            <person name="Lipovich L."/>
            <person name="Liu J."/>
            <person name="Liuni S."/>
            <person name="McWilliam S."/>
            <person name="Madan Babu M."/>
            <person name="Madera M."/>
            <person name="Marchionni L."/>
            <person name="Matsuda H."/>
            <person name="Matsuzawa S."/>
            <person name="Miki H."/>
            <person name="Mignone F."/>
            <person name="Miyake S."/>
            <person name="Morris K."/>
            <person name="Mottagui-Tabar S."/>
            <person name="Mulder N."/>
            <person name="Nakano N."/>
            <person name="Nakauchi H."/>
            <person name="Ng P."/>
            <person name="Nilsson R."/>
            <person name="Nishiguchi S."/>
            <person name="Nishikawa S."/>
            <person name="Nori F."/>
            <person name="Ohara O."/>
            <person name="Okazaki Y."/>
            <person name="Orlando V."/>
            <person name="Pang K.C."/>
            <person name="Pavan W.J."/>
            <person name="Pavesi G."/>
            <person name="Pesole G."/>
            <person name="Petrovsky N."/>
            <person name="Piazza S."/>
            <person name="Reed J."/>
            <person name="Reid J.F."/>
            <person name="Ring B.Z."/>
            <person name="Ringwald M."/>
            <person name="Rost B."/>
            <person name="Ruan Y."/>
            <person name="Salzberg S.L."/>
            <person name="Sandelin A."/>
            <person name="Schneider C."/>
            <person name="Schoenbach C."/>
            <person name="Sekiguchi K."/>
            <person name="Semple C.A."/>
            <person name="Seno S."/>
            <person name="Sessa L."/>
            <person name="Sheng Y."/>
            <person name="Shibata Y."/>
            <person name="Shimada H."/>
            <person name="Shimada K."/>
            <person name="Silva D."/>
            <person name="Sinclair B."/>
            <person name="Sperling S."/>
            <person name="Stupka E."/>
            <person name="Sugiura K."/>
            <person name="Sultana R."/>
            <person name="Takenaka Y."/>
            <person name="Taki K."/>
            <person name="Tammoja K."/>
            <person name="Tan S.L."/>
            <person name="Tang S."/>
            <person name="Taylor M.S."/>
            <person name="Tegner J."/>
            <person name="Teichmann S.A."/>
            <person name="Ueda H.R."/>
            <person name="van Nimwegen E."/>
            <person name="Verardo R."/>
            <person name="Wei C.L."/>
            <person name="Yagi K."/>
            <person name="Yamanishi H."/>
            <person name="Zabarovsky E."/>
            <person name="Zhu S."/>
            <person name="Zimmer A."/>
            <person name="Hide W."/>
            <person name="Bult C."/>
            <person name="Grimmond S.M."/>
            <person name="Teasdale R.D."/>
            <person name="Liu E.T."/>
            <person name="Brusic V."/>
            <person name="Quackenbush J."/>
            <person name="Wahlestedt C."/>
            <person name="Mattick J.S."/>
            <person name="Hume D.A."/>
            <person name="Kai C."/>
            <person name="Sasaki D."/>
            <person name="Tomaru Y."/>
            <person name="Fukuda S."/>
            <person name="Kanamori-Katayama M."/>
            <person name="Suzuki M."/>
            <person name="Aoki J."/>
            <person name="Arakawa T."/>
            <person name="Iida J."/>
            <person name="Imamura K."/>
            <person name="Itoh M."/>
            <person name="Kato T."/>
            <person name="Kawaji H."/>
            <person name="Kawagashira N."/>
            <person name="Kawashima T."/>
            <person name="Kojima M."/>
            <person name="Kondo S."/>
            <person name="Konno H."/>
            <person name="Nakano K."/>
            <person name="Ninomiya N."/>
            <person name="Nishio T."/>
            <person name="Okada M."/>
            <person name="Plessy C."/>
            <person name="Shibata K."/>
            <person name="Shiraki T."/>
            <person name="Suzuki S."/>
            <person name="Tagami M."/>
            <person name="Waki K."/>
            <person name="Watahiki A."/>
            <person name="Okamura-Oho Y."/>
            <person name="Suzuki H."/>
            <person name="Kawai J."/>
            <person name="Hayashizaki Y."/>
        </authorList>
    </citation>
    <scope>NUCLEOTIDE SEQUENCE [LARGE SCALE MRNA]</scope>
    <source>
        <strain>C57BL/6J</strain>
        <tissue>Testis</tissue>
    </source>
</reference>
<reference key="4">
    <citation type="journal article" date="2009" name="PLoS Biol.">
        <title>Lineage-specific biology revealed by a finished genome assembly of the mouse.</title>
        <authorList>
            <person name="Church D.M."/>
            <person name="Goodstadt L."/>
            <person name="Hillier L.W."/>
            <person name="Zody M.C."/>
            <person name="Goldstein S."/>
            <person name="She X."/>
            <person name="Bult C.J."/>
            <person name="Agarwala R."/>
            <person name="Cherry J.L."/>
            <person name="DiCuccio M."/>
            <person name="Hlavina W."/>
            <person name="Kapustin Y."/>
            <person name="Meric P."/>
            <person name="Maglott D."/>
            <person name="Birtle Z."/>
            <person name="Marques A.C."/>
            <person name="Graves T."/>
            <person name="Zhou S."/>
            <person name="Teague B."/>
            <person name="Potamousis K."/>
            <person name="Churas C."/>
            <person name="Place M."/>
            <person name="Herschleb J."/>
            <person name="Runnheim R."/>
            <person name="Forrest D."/>
            <person name="Amos-Landgraf J."/>
            <person name="Schwartz D.C."/>
            <person name="Cheng Z."/>
            <person name="Lindblad-Toh K."/>
            <person name="Eichler E.E."/>
            <person name="Ponting C.P."/>
        </authorList>
    </citation>
    <scope>NUCLEOTIDE SEQUENCE [LARGE SCALE GENOMIC DNA]</scope>
    <source>
        <strain>C57BL/6J</strain>
    </source>
</reference>
<reference key="5">
    <citation type="journal article" date="2002" name="Proc. Natl. Acad. Sci. U.S.A.">
        <title>Discovery of five conserved beta-defensin gene clusters using a computational search strategy.</title>
        <authorList>
            <person name="Schutte B.C."/>
            <person name="Mitros J.P."/>
            <person name="Bartlett J.A."/>
            <person name="Walters J.D."/>
            <person name="Jia H.P."/>
            <person name="Welsh M.J."/>
            <person name="Casavant T.L."/>
            <person name="McCray P.B. Jr."/>
        </authorList>
    </citation>
    <scope>NUCLEOTIDE SEQUENCE [MRNA] OF 1-43</scope>
    <source>
        <strain>CD-1</strain>
    </source>
</reference>
<gene>
    <name type="primary">Defb36</name>
</gene>
<feature type="signal peptide" evidence="2">
    <location>
        <begin position="1"/>
        <end position="22"/>
    </location>
</feature>
<feature type="peptide" id="PRO_0000006948" description="Beta-defensin 36">
    <location>
        <begin position="23"/>
        <end position="67"/>
    </location>
</feature>
<feature type="disulfide bond" evidence="1">
    <location>
        <begin position="25"/>
        <end position="52"/>
    </location>
</feature>
<feature type="disulfide bond" evidence="1">
    <location>
        <begin position="32"/>
        <end position="46"/>
    </location>
</feature>
<feature type="disulfide bond" evidence="1">
    <location>
        <begin position="36"/>
        <end position="53"/>
    </location>
</feature>
<proteinExistence type="inferred from homology"/>
<keyword id="KW-0044">Antibiotic</keyword>
<keyword id="KW-0929">Antimicrobial</keyword>
<keyword id="KW-0211">Defensin</keyword>
<keyword id="KW-1015">Disulfide bond</keyword>
<keyword id="KW-1185">Reference proteome</keyword>
<keyword id="KW-0964">Secreted</keyword>
<keyword id="KW-0732">Signal</keyword>
<protein>
    <recommendedName>
        <fullName>Beta-defensin 36</fullName>
        <shortName>BD-36</shortName>
        <shortName>mBD-36</shortName>
    </recommendedName>
    <alternativeName>
        <fullName>Defensin, beta 36</fullName>
    </alternativeName>
</protein>
<name>DFB36_MOUSE</name>
<evidence type="ECO:0000250" key="1"/>
<evidence type="ECO:0000255" key="2"/>
<evidence type="ECO:0000305" key="3"/>
<dbReference type="EMBL" id="DQ012042">
    <property type="protein sequence ID" value="AAY59778.1"/>
    <property type="molecule type" value="mRNA"/>
</dbReference>
<dbReference type="EMBL" id="AY591385">
    <property type="protein sequence ID" value="AAT67592.1"/>
    <property type="molecule type" value="mRNA"/>
</dbReference>
<dbReference type="EMBL" id="AK005872">
    <property type="protein sequence ID" value="BAE20419.1"/>
    <property type="molecule type" value="mRNA"/>
</dbReference>
<dbReference type="EMBL" id="AL845162">
    <property type="status" value="NOT_ANNOTATED_CDS"/>
    <property type="molecule type" value="Genomic_DNA"/>
</dbReference>
<dbReference type="EMBL" id="AF533211">
    <property type="protein sequence ID" value="AAM97929.1"/>
    <property type="molecule type" value="mRNA"/>
</dbReference>
<dbReference type="CCDS" id="CCDS38279.1"/>
<dbReference type="RefSeq" id="NP_001032324.1">
    <property type="nucleotide sequence ID" value="NM_001037247.4"/>
</dbReference>
<dbReference type="SMR" id="Q8K3U4"/>
<dbReference type="FunCoup" id="Q8K3U4">
    <property type="interactions" value="1"/>
</dbReference>
<dbReference type="STRING" id="10090.ENSMUSP00000059665"/>
<dbReference type="PhosphoSitePlus" id="Q8K3U4"/>
<dbReference type="PaxDb" id="10090-ENSMUSP00000059665"/>
<dbReference type="ProteomicsDB" id="279638"/>
<dbReference type="Antibodypedia" id="82494">
    <property type="antibodies" value="1 antibodies from 1 providers"/>
</dbReference>
<dbReference type="DNASU" id="266620"/>
<dbReference type="Ensembl" id="ENSMUST00000058086.6">
    <property type="protein sequence ID" value="ENSMUSP00000059665.6"/>
    <property type="gene ID" value="ENSMUSG00000044863.8"/>
</dbReference>
<dbReference type="GeneID" id="266620"/>
<dbReference type="KEGG" id="mmu:266620"/>
<dbReference type="UCSC" id="uc008nfu.2">
    <property type="organism name" value="mouse"/>
</dbReference>
<dbReference type="AGR" id="MGI:2385956"/>
<dbReference type="CTD" id="266620"/>
<dbReference type="MGI" id="MGI:2385956">
    <property type="gene designation" value="Defb36"/>
</dbReference>
<dbReference type="VEuPathDB" id="HostDB:ENSMUSG00000044863"/>
<dbReference type="eggNOG" id="ENOG502TIGY">
    <property type="taxonomic scope" value="Eukaryota"/>
</dbReference>
<dbReference type="GeneTree" id="ENSGT00940000162385"/>
<dbReference type="HOGENOM" id="CLU_181906_2_0_1"/>
<dbReference type="InParanoid" id="Q8K3U4"/>
<dbReference type="OMA" id="RCWNLHG"/>
<dbReference type="OrthoDB" id="9827959at2759"/>
<dbReference type="PhylomeDB" id="Q8K3U4"/>
<dbReference type="TreeFam" id="TF336381"/>
<dbReference type="Reactome" id="R-MMU-1461957">
    <property type="pathway name" value="Beta defensins"/>
</dbReference>
<dbReference type="Reactome" id="R-MMU-1461973">
    <property type="pathway name" value="Defensins"/>
</dbReference>
<dbReference type="BioGRID-ORCS" id="266620">
    <property type="hits" value="2 hits in 75 CRISPR screens"/>
</dbReference>
<dbReference type="ChiTaRS" id="Defb36">
    <property type="organism name" value="mouse"/>
</dbReference>
<dbReference type="PRO" id="PR:Q8K3U4"/>
<dbReference type="Proteomes" id="UP000000589">
    <property type="component" value="Chromosome 2"/>
</dbReference>
<dbReference type="RNAct" id="Q8K3U4">
    <property type="molecule type" value="protein"/>
</dbReference>
<dbReference type="Bgee" id="ENSMUSG00000044863">
    <property type="expression patterns" value="Expressed in testis and 13 other cell types or tissues"/>
</dbReference>
<dbReference type="GO" id="GO:0005576">
    <property type="term" value="C:extracellular region"/>
    <property type="evidence" value="ECO:0007669"/>
    <property type="project" value="UniProtKB-SubCell"/>
</dbReference>
<dbReference type="GO" id="GO:0042742">
    <property type="term" value="P:defense response to bacterium"/>
    <property type="evidence" value="ECO:0007669"/>
    <property type="project" value="UniProtKB-KW"/>
</dbReference>
<dbReference type="GO" id="GO:0045087">
    <property type="term" value="P:innate immune response"/>
    <property type="evidence" value="ECO:0007669"/>
    <property type="project" value="InterPro"/>
</dbReference>
<dbReference type="Gene3D" id="3.10.360.10">
    <property type="entry name" value="Antimicrobial Peptide, Beta-defensin 2, Chain A"/>
    <property type="match status" value="1"/>
</dbReference>
<dbReference type="InterPro" id="IPR050544">
    <property type="entry name" value="Beta-defensin"/>
</dbReference>
<dbReference type="InterPro" id="IPR025933">
    <property type="entry name" value="Beta_defensin_dom"/>
</dbReference>
<dbReference type="PANTHER" id="PTHR15001:SF3">
    <property type="entry name" value="BETA-DEFENSIN 123"/>
    <property type="match status" value="1"/>
</dbReference>
<dbReference type="PANTHER" id="PTHR15001">
    <property type="entry name" value="BETA-DEFENSIN 123-RELATED"/>
    <property type="match status" value="1"/>
</dbReference>
<dbReference type="Pfam" id="PF13841">
    <property type="entry name" value="Defensin_beta_2"/>
    <property type="match status" value="1"/>
</dbReference>